<evidence type="ECO:0000255" key="1">
    <source>
        <dbReference type="HAMAP-Rule" id="MF_00340"/>
    </source>
</evidence>
<evidence type="ECO:0000256" key="2">
    <source>
        <dbReference type="SAM" id="MobiDB-lite"/>
    </source>
</evidence>
<evidence type="ECO:0000305" key="3"/>
<proteinExistence type="inferred from homology"/>
<dbReference type="EMBL" id="CP001357">
    <property type="protein sequence ID" value="ACN84137.1"/>
    <property type="molecule type" value="Genomic_DNA"/>
</dbReference>
<dbReference type="RefSeq" id="WP_008721874.1">
    <property type="nucleotide sequence ID" value="NC_012225.1"/>
</dbReference>
<dbReference type="SMR" id="C0R1Z9"/>
<dbReference type="STRING" id="565034.BHWA1_01667"/>
<dbReference type="GeneID" id="66486894"/>
<dbReference type="KEGG" id="bhy:BHWA1_01667"/>
<dbReference type="eggNOG" id="COG0333">
    <property type="taxonomic scope" value="Bacteria"/>
</dbReference>
<dbReference type="HOGENOM" id="CLU_129084_1_3_12"/>
<dbReference type="Proteomes" id="UP000001803">
    <property type="component" value="Chromosome"/>
</dbReference>
<dbReference type="GO" id="GO:0015934">
    <property type="term" value="C:large ribosomal subunit"/>
    <property type="evidence" value="ECO:0007669"/>
    <property type="project" value="InterPro"/>
</dbReference>
<dbReference type="GO" id="GO:0003735">
    <property type="term" value="F:structural constituent of ribosome"/>
    <property type="evidence" value="ECO:0007669"/>
    <property type="project" value="InterPro"/>
</dbReference>
<dbReference type="GO" id="GO:0006412">
    <property type="term" value="P:translation"/>
    <property type="evidence" value="ECO:0007669"/>
    <property type="project" value="UniProtKB-UniRule"/>
</dbReference>
<dbReference type="HAMAP" id="MF_00340">
    <property type="entry name" value="Ribosomal_bL32"/>
    <property type="match status" value="1"/>
</dbReference>
<dbReference type="InterPro" id="IPR002677">
    <property type="entry name" value="Ribosomal_bL32"/>
</dbReference>
<dbReference type="InterPro" id="IPR044957">
    <property type="entry name" value="Ribosomal_bL32_bact"/>
</dbReference>
<dbReference type="InterPro" id="IPR011332">
    <property type="entry name" value="Ribosomal_zn-bd"/>
</dbReference>
<dbReference type="NCBIfam" id="TIGR01031">
    <property type="entry name" value="rpmF_bact"/>
    <property type="match status" value="1"/>
</dbReference>
<dbReference type="PANTHER" id="PTHR35534">
    <property type="entry name" value="50S RIBOSOMAL PROTEIN L32"/>
    <property type="match status" value="1"/>
</dbReference>
<dbReference type="PANTHER" id="PTHR35534:SF1">
    <property type="entry name" value="LARGE RIBOSOMAL SUBUNIT PROTEIN BL32"/>
    <property type="match status" value="1"/>
</dbReference>
<dbReference type="Pfam" id="PF01783">
    <property type="entry name" value="Ribosomal_L32p"/>
    <property type="match status" value="1"/>
</dbReference>
<dbReference type="SUPFAM" id="SSF57829">
    <property type="entry name" value="Zn-binding ribosomal proteins"/>
    <property type="match status" value="1"/>
</dbReference>
<feature type="chain" id="PRO_1000195961" description="Large ribosomal subunit protein bL32">
    <location>
        <begin position="1"/>
        <end position="64"/>
    </location>
</feature>
<feature type="region of interest" description="Disordered" evidence="2">
    <location>
        <begin position="1"/>
        <end position="22"/>
    </location>
</feature>
<feature type="compositionally biased region" description="Basic residues" evidence="2">
    <location>
        <begin position="1"/>
        <end position="16"/>
    </location>
</feature>
<gene>
    <name evidence="1" type="primary">rpmF</name>
    <name type="ordered locus">BHWA1_01667</name>
</gene>
<name>RL32_BRAHW</name>
<accession>C0R1Z9</accession>
<keyword id="KW-0687">Ribonucleoprotein</keyword>
<keyword id="KW-0689">Ribosomal protein</keyword>
<organism>
    <name type="scientific">Brachyspira hyodysenteriae (strain ATCC 49526 / WA1)</name>
    <dbReference type="NCBI Taxonomy" id="565034"/>
    <lineage>
        <taxon>Bacteria</taxon>
        <taxon>Pseudomonadati</taxon>
        <taxon>Spirochaetota</taxon>
        <taxon>Spirochaetia</taxon>
        <taxon>Brachyspirales</taxon>
        <taxon>Brachyspiraceae</taxon>
        <taxon>Brachyspira</taxon>
    </lineage>
</organism>
<reference key="1">
    <citation type="journal article" date="2009" name="PLoS ONE">
        <title>Genome sequence of the pathogenic intestinal spirochete Brachyspira hyodysenteriae reveals adaptations to its lifestyle in the porcine large intestine.</title>
        <authorList>
            <person name="Bellgard M.I."/>
            <person name="Wanchanthuek P."/>
            <person name="La T."/>
            <person name="Ryan K."/>
            <person name="Moolhuijzen P."/>
            <person name="Albertyn Z."/>
            <person name="Shaban B."/>
            <person name="Motro Y."/>
            <person name="Dunn D.S."/>
            <person name="Schibeci D."/>
            <person name="Hunter A."/>
            <person name="Barrero R."/>
            <person name="Phillips N.D."/>
            <person name="Hampson D.J."/>
        </authorList>
    </citation>
    <scope>NUCLEOTIDE SEQUENCE [LARGE SCALE GENOMIC DNA]</scope>
    <source>
        <strain>ATCC 49526 / WA1</strain>
    </source>
</reference>
<comment type="similarity">
    <text evidence="1">Belongs to the bacterial ribosomal protein bL32 family.</text>
</comment>
<protein>
    <recommendedName>
        <fullName evidence="1">Large ribosomal subunit protein bL32</fullName>
    </recommendedName>
    <alternativeName>
        <fullName evidence="3">50S ribosomal protein L32</fullName>
    </alternativeName>
</protein>
<sequence>MAVPKHRKSKAKKRSRQAANDKRFLGSLSICPQCGAERMPHRICPECGFYKDRVIKAPKTQNAG</sequence>